<reference key="1">
    <citation type="journal article" date="2006" name="Genome Res.">
        <title>Skewed genomic variability in strains of the toxigenic bacterial pathogen, Clostridium perfringens.</title>
        <authorList>
            <person name="Myers G.S.A."/>
            <person name="Rasko D.A."/>
            <person name="Cheung J.K."/>
            <person name="Ravel J."/>
            <person name="Seshadri R."/>
            <person name="DeBoy R.T."/>
            <person name="Ren Q."/>
            <person name="Varga J."/>
            <person name="Awad M.M."/>
            <person name="Brinkac L.M."/>
            <person name="Daugherty S.C."/>
            <person name="Haft D.H."/>
            <person name="Dodson R.J."/>
            <person name="Madupu R."/>
            <person name="Nelson W.C."/>
            <person name="Rosovitz M.J."/>
            <person name="Sullivan S.A."/>
            <person name="Khouri H."/>
            <person name="Dimitrov G.I."/>
            <person name="Watkins K.L."/>
            <person name="Mulligan S."/>
            <person name="Benton J."/>
            <person name="Radune D."/>
            <person name="Fisher D.J."/>
            <person name="Atkins H.S."/>
            <person name="Hiscox T."/>
            <person name="Jost B.H."/>
            <person name="Billington S.J."/>
            <person name="Songer J.G."/>
            <person name="McClane B.A."/>
            <person name="Titball R.W."/>
            <person name="Rood J.I."/>
            <person name="Melville S.B."/>
            <person name="Paulsen I.T."/>
        </authorList>
    </citation>
    <scope>NUCLEOTIDE SEQUENCE [LARGE SCALE GENOMIC DNA]</scope>
    <source>
        <strain>SM101 / Type A</strain>
    </source>
</reference>
<gene>
    <name evidence="2" type="primary">arcB</name>
    <name type="ordered locus">CPR_0158</name>
</gene>
<accession>Q0SWK5</accession>
<name>OTC_CLOPS</name>
<comment type="function">
    <text evidence="1">Reversibly catalyzes the transfer of the carbamoyl group from carbamoyl phosphate (CP) to the N(epsilon) atom of ornithine (ORN) to produce L-citrulline.</text>
</comment>
<comment type="catalytic activity">
    <reaction evidence="2">
        <text>carbamoyl phosphate + L-ornithine = L-citrulline + phosphate + H(+)</text>
        <dbReference type="Rhea" id="RHEA:19513"/>
        <dbReference type="ChEBI" id="CHEBI:15378"/>
        <dbReference type="ChEBI" id="CHEBI:43474"/>
        <dbReference type="ChEBI" id="CHEBI:46911"/>
        <dbReference type="ChEBI" id="CHEBI:57743"/>
        <dbReference type="ChEBI" id="CHEBI:58228"/>
        <dbReference type="EC" id="2.1.3.3"/>
    </reaction>
</comment>
<comment type="pathway">
    <text evidence="2">Amino-acid degradation; L-arginine degradation via ADI pathway; carbamoyl phosphate from L-arginine: step 2/2.</text>
</comment>
<comment type="subcellular location">
    <subcellularLocation>
        <location evidence="2">Cytoplasm</location>
    </subcellularLocation>
</comment>
<comment type="similarity">
    <text evidence="2">Belongs to the aspartate/ornithine carbamoyltransferase superfamily. OTCase family.</text>
</comment>
<keyword id="KW-0056">Arginine metabolism</keyword>
<keyword id="KW-0963">Cytoplasm</keyword>
<keyword id="KW-0808">Transferase</keyword>
<protein>
    <recommendedName>
        <fullName evidence="2">Ornithine carbamoyltransferase</fullName>
        <shortName evidence="2">OTCase</shortName>
        <ecNumber evidence="2">2.1.3.3</ecNumber>
    </recommendedName>
</protein>
<organism>
    <name type="scientific">Clostridium perfringens (strain SM101 / Type A)</name>
    <dbReference type="NCBI Taxonomy" id="289380"/>
    <lineage>
        <taxon>Bacteria</taxon>
        <taxon>Bacillati</taxon>
        <taxon>Bacillota</taxon>
        <taxon>Clostridia</taxon>
        <taxon>Eubacteriales</taxon>
        <taxon>Clostridiaceae</taxon>
        <taxon>Clostridium</taxon>
    </lineage>
</organism>
<proteinExistence type="inferred from homology"/>
<evidence type="ECO:0000250" key="1"/>
<evidence type="ECO:0000255" key="2">
    <source>
        <dbReference type="HAMAP-Rule" id="MF_01109"/>
    </source>
</evidence>
<sequence length="331" mass="37125">MAVNLKGRSFLTLKDFTPAEIRYLLDLSHDLKAKKRAGILGDSLKGKNVVLLFEKTSTRTRCAFECGAAEEGAHVTFLTNSQMGKKESIEDTAKVLGRMYDGIEFRGFKQSTVEELAKHAGVPVWNGLTDADHPTQILADFLTIEEHAHKPLSEIKLVFTGDTRNNMSYALMYGAAKMGMHFVALGPDSLKPDEDILKEMQEYSKETGATIEFSSNVDEAVKGADVIYTDIWVSMGEDESLYPERVKLLTPYKVTREMMNKTGNKNTLFMHCLPSFHDEDTEVCKDMMDRLGLDIREVEDEVFRSKNSVVFDEAENRMHTIKAVMVATAGK</sequence>
<feature type="chain" id="PRO_1000065090" description="Ornithine carbamoyltransferase">
    <location>
        <begin position="1"/>
        <end position="331"/>
    </location>
</feature>
<feature type="binding site" evidence="2">
    <location>
        <begin position="57"/>
        <end position="60"/>
    </location>
    <ligand>
        <name>carbamoyl phosphate</name>
        <dbReference type="ChEBI" id="CHEBI:58228"/>
    </ligand>
</feature>
<feature type="binding site" evidence="2">
    <location>
        <position position="82"/>
    </location>
    <ligand>
        <name>carbamoyl phosphate</name>
        <dbReference type="ChEBI" id="CHEBI:58228"/>
    </ligand>
</feature>
<feature type="binding site" evidence="2">
    <location>
        <position position="106"/>
    </location>
    <ligand>
        <name>carbamoyl phosphate</name>
        <dbReference type="ChEBI" id="CHEBI:58228"/>
    </ligand>
</feature>
<feature type="binding site" evidence="2">
    <location>
        <begin position="133"/>
        <end position="136"/>
    </location>
    <ligand>
        <name>carbamoyl phosphate</name>
        <dbReference type="ChEBI" id="CHEBI:58228"/>
    </ligand>
</feature>
<feature type="binding site" evidence="2">
    <location>
        <position position="166"/>
    </location>
    <ligand>
        <name>L-ornithine</name>
        <dbReference type="ChEBI" id="CHEBI:46911"/>
    </ligand>
</feature>
<feature type="binding site" evidence="2">
    <location>
        <position position="230"/>
    </location>
    <ligand>
        <name>L-ornithine</name>
        <dbReference type="ChEBI" id="CHEBI:46911"/>
    </ligand>
</feature>
<feature type="binding site" evidence="2">
    <location>
        <begin position="234"/>
        <end position="235"/>
    </location>
    <ligand>
        <name>L-ornithine</name>
        <dbReference type="ChEBI" id="CHEBI:46911"/>
    </ligand>
</feature>
<feature type="binding site" evidence="2">
    <location>
        <begin position="272"/>
        <end position="273"/>
    </location>
    <ligand>
        <name>carbamoyl phosphate</name>
        <dbReference type="ChEBI" id="CHEBI:58228"/>
    </ligand>
</feature>
<feature type="binding site" evidence="2">
    <location>
        <position position="317"/>
    </location>
    <ligand>
        <name>carbamoyl phosphate</name>
        <dbReference type="ChEBI" id="CHEBI:58228"/>
    </ligand>
</feature>
<dbReference type="EC" id="2.1.3.3" evidence="2"/>
<dbReference type="EMBL" id="CP000312">
    <property type="protein sequence ID" value="ABG85583.1"/>
    <property type="molecule type" value="Genomic_DNA"/>
</dbReference>
<dbReference type="RefSeq" id="WP_011591311.1">
    <property type="nucleotide sequence ID" value="NC_008262.1"/>
</dbReference>
<dbReference type="SMR" id="Q0SWK5"/>
<dbReference type="KEGG" id="cpr:CPR_0158"/>
<dbReference type="UniPathway" id="UPA00254">
    <property type="reaction ID" value="UER00365"/>
</dbReference>
<dbReference type="Proteomes" id="UP000001824">
    <property type="component" value="Chromosome"/>
</dbReference>
<dbReference type="GO" id="GO:0005737">
    <property type="term" value="C:cytoplasm"/>
    <property type="evidence" value="ECO:0007669"/>
    <property type="project" value="UniProtKB-SubCell"/>
</dbReference>
<dbReference type="GO" id="GO:0016597">
    <property type="term" value="F:amino acid binding"/>
    <property type="evidence" value="ECO:0007669"/>
    <property type="project" value="InterPro"/>
</dbReference>
<dbReference type="GO" id="GO:0004585">
    <property type="term" value="F:ornithine carbamoyltransferase activity"/>
    <property type="evidence" value="ECO:0007669"/>
    <property type="project" value="UniProtKB-UniRule"/>
</dbReference>
<dbReference type="GO" id="GO:0042450">
    <property type="term" value="P:arginine biosynthetic process via ornithine"/>
    <property type="evidence" value="ECO:0007669"/>
    <property type="project" value="TreeGrafter"/>
</dbReference>
<dbReference type="GO" id="GO:0019547">
    <property type="term" value="P:arginine catabolic process to ornithine"/>
    <property type="evidence" value="ECO:0007669"/>
    <property type="project" value="UniProtKB-UniRule"/>
</dbReference>
<dbReference type="GO" id="GO:0019240">
    <property type="term" value="P:citrulline biosynthetic process"/>
    <property type="evidence" value="ECO:0007669"/>
    <property type="project" value="TreeGrafter"/>
</dbReference>
<dbReference type="FunFam" id="3.40.50.1370:FF:000008">
    <property type="entry name" value="Ornithine carbamoyltransferase"/>
    <property type="match status" value="1"/>
</dbReference>
<dbReference type="Gene3D" id="3.40.50.1370">
    <property type="entry name" value="Aspartate/ornithine carbamoyltransferase"/>
    <property type="match status" value="2"/>
</dbReference>
<dbReference type="HAMAP" id="MF_01109">
    <property type="entry name" value="OTCase"/>
    <property type="match status" value="1"/>
</dbReference>
<dbReference type="InterPro" id="IPR006132">
    <property type="entry name" value="Asp/Orn_carbamoyltranf_P-bd"/>
</dbReference>
<dbReference type="InterPro" id="IPR006130">
    <property type="entry name" value="Asp/Orn_carbamoylTrfase"/>
</dbReference>
<dbReference type="InterPro" id="IPR036901">
    <property type="entry name" value="Asp/Orn_carbamoylTrfase_sf"/>
</dbReference>
<dbReference type="InterPro" id="IPR006131">
    <property type="entry name" value="Asp_carbamoyltransf_Asp/Orn-bd"/>
</dbReference>
<dbReference type="InterPro" id="IPR002292">
    <property type="entry name" value="Orn/put_carbamltrans"/>
</dbReference>
<dbReference type="InterPro" id="IPR024904">
    <property type="entry name" value="OTCase_ArgI"/>
</dbReference>
<dbReference type="NCBIfam" id="TIGR00658">
    <property type="entry name" value="orni_carb_tr"/>
    <property type="match status" value="1"/>
</dbReference>
<dbReference type="NCBIfam" id="NF003286">
    <property type="entry name" value="PRK04284.1"/>
    <property type="match status" value="1"/>
</dbReference>
<dbReference type="PANTHER" id="PTHR45753:SF2">
    <property type="entry name" value="ORNITHINE CARBAMOYLTRANSFERASE"/>
    <property type="match status" value="1"/>
</dbReference>
<dbReference type="PANTHER" id="PTHR45753">
    <property type="entry name" value="ORNITHINE CARBAMOYLTRANSFERASE, MITOCHONDRIAL"/>
    <property type="match status" value="1"/>
</dbReference>
<dbReference type="Pfam" id="PF00185">
    <property type="entry name" value="OTCace"/>
    <property type="match status" value="1"/>
</dbReference>
<dbReference type="Pfam" id="PF02729">
    <property type="entry name" value="OTCace_N"/>
    <property type="match status" value="1"/>
</dbReference>
<dbReference type="PRINTS" id="PR00100">
    <property type="entry name" value="AOTCASE"/>
</dbReference>
<dbReference type="PRINTS" id="PR00102">
    <property type="entry name" value="OTCASE"/>
</dbReference>
<dbReference type="SUPFAM" id="SSF53671">
    <property type="entry name" value="Aspartate/ornithine carbamoyltransferase"/>
    <property type="match status" value="1"/>
</dbReference>
<dbReference type="PROSITE" id="PS00097">
    <property type="entry name" value="CARBAMOYLTRANSFERASE"/>
    <property type="match status" value="1"/>
</dbReference>